<feature type="chain" id="PRO_0000138897" description="Protease HtpX homolog">
    <location>
        <begin position="1"/>
        <end position="299"/>
    </location>
</feature>
<feature type="transmembrane region" description="Helical" evidence="1">
    <location>
        <begin position="15"/>
        <end position="35"/>
    </location>
</feature>
<feature type="transmembrane region" description="Helical" evidence="1">
    <location>
        <begin position="39"/>
        <end position="59"/>
    </location>
</feature>
<feature type="transmembrane region" description="Helical" evidence="1">
    <location>
        <begin position="158"/>
        <end position="178"/>
    </location>
</feature>
<feature type="transmembrane region" description="Helical" evidence="1">
    <location>
        <begin position="198"/>
        <end position="218"/>
    </location>
</feature>
<feature type="active site" evidence="1">
    <location>
        <position position="144"/>
    </location>
</feature>
<feature type="binding site" evidence="1">
    <location>
        <position position="143"/>
    </location>
    <ligand>
        <name>Zn(2+)</name>
        <dbReference type="ChEBI" id="CHEBI:29105"/>
        <note>catalytic</note>
    </ligand>
</feature>
<feature type="binding site" evidence="1">
    <location>
        <position position="147"/>
    </location>
    <ligand>
        <name>Zn(2+)</name>
        <dbReference type="ChEBI" id="CHEBI:29105"/>
        <note>catalytic</note>
    </ligand>
</feature>
<feature type="binding site" evidence="1">
    <location>
        <position position="227"/>
    </location>
    <ligand>
        <name>Zn(2+)</name>
        <dbReference type="ChEBI" id="CHEBI:29105"/>
        <note>catalytic</note>
    </ligand>
</feature>
<keyword id="KW-1003">Cell membrane</keyword>
<keyword id="KW-0378">Hydrolase</keyword>
<keyword id="KW-0472">Membrane</keyword>
<keyword id="KW-0479">Metal-binding</keyword>
<keyword id="KW-0482">Metalloprotease</keyword>
<keyword id="KW-0645">Protease</keyword>
<keyword id="KW-1185">Reference proteome</keyword>
<keyword id="KW-0812">Transmembrane</keyword>
<keyword id="KW-1133">Transmembrane helix</keyword>
<keyword id="KW-0862">Zinc</keyword>
<protein>
    <recommendedName>
        <fullName evidence="1">Protease HtpX homolog</fullName>
        <ecNumber evidence="1">3.4.24.-</ecNumber>
    </recommendedName>
</protein>
<gene>
    <name evidence="1" type="primary">htpX</name>
    <name type="ordered locus">spr1162</name>
</gene>
<evidence type="ECO:0000255" key="1">
    <source>
        <dbReference type="HAMAP-Rule" id="MF_00188"/>
    </source>
</evidence>
<evidence type="ECO:0000305" key="2"/>
<comment type="cofactor">
    <cofactor evidence="1">
        <name>Zn(2+)</name>
        <dbReference type="ChEBI" id="CHEBI:29105"/>
    </cofactor>
    <text evidence="1">Binds 1 zinc ion per subunit.</text>
</comment>
<comment type="subcellular location">
    <subcellularLocation>
        <location evidence="1">Cell membrane</location>
        <topology evidence="1">Multi-pass membrane protein</topology>
    </subcellularLocation>
</comment>
<comment type="similarity">
    <text evidence="1">Belongs to the peptidase M48B family.</text>
</comment>
<comment type="sequence caution" evidence="2">
    <conflict type="erroneous initiation">
        <sequence resource="EMBL-CDS" id="AAK99965"/>
    </conflict>
    <text>Extended N-terminus.</text>
</comment>
<reference key="1">
    <citation type="journal article" date="2001" name="J. Bacteriol.">
        <title>Genome of the bacterium Streptococcus pneumoniae strain R6.</title>
        <authorList>
            <person name="Hoskins J."/>
            <person name="Alborn W.E. Jr."/>
            <person name="Arnold J."/>
            <person name="Blaszczak L.C."/>
            <person name="Burgett S."/>
            <person name="DeHoff B.S."/>
            <person name="Estrem S.T."/>
            <person name="Fritz L."/>
            <person name="Fu D.-J."/>
            <person name="Fuller W."/>
            <person name="Geringer C."/>
            <person name="Gilmour R."/>
            <person name="Glass J.S."/>
            <person name="Khoja H."/>
            <person name="Kraft A.R."/>
            <person name="Lagace R.E."/>
            <person name="LeBlanc D.J."/>
            <person name="Lee L.N."/>
            <person name="Lefkowitz E.J."/>
            <person name="Lu J."/>
            <person name="Matsushima P."/>
            <person name="McAhren S.M."/>
            <person name="McHenney M."/>
            <person name="McLeaster K."/>
            <person name="Mundy C.W."/>
            <person name="Nicas T.I."/>
            <person name="Norris F.H."/>
            <person name="O'Gara M."/>
            <person name="Peery R.B."/>
            <person name="Robertson G.T."/>
            <person name="Rockey P."/>
            <person name="Sun P.-M."/>
            <person name="Winkler M.E."/>
            <person name="Yang Y."/>
            <person name="Young-Bellido M."/>
            <person name="Zhao G."/>
            <person name="Zook C.A."/>
            <person name="Baltz R.H."/>
            <person name="Jaskunas S.R."/>
            <person name="Rosteck P.R. Jr."/>
            <person name="Skatrud P.L."/>
            <person name="Glass J.I."/>
        </authorList>
    </citation>
    <scope>NUCLEOTIDE SEQUENCE [LARGE SCALE GENOMIC DNA]</scope>
    <source>
        <strain>ATCC BAA-255 / R6</strain>
    </source>
</reference>
<sequence length="299" mass="32794">MLFDQIASNKRKTWILLLVFFLLLALVGYAVGYLFIRSGLGGLVIALIIGFIYALSMIFQSTEIVMSMNGAREVDEQTAPDLYHVVEDMALVAQIPMPRVFIIDDPALNAFATGSNPQNAAVAATSGLLAIMNREELEAVMGHEVSHIRNYDIRISTIAVALVSAITMLSGMAGRMMWWGGAGRRRSDDDRDGNGLEIIMLVVSLLAIVLAPLAATLVQLAISRQREFLADASSVELTRNPQGMINALDKLDNSKPMSRHVDDASSALYINDPKKGGGFQKLFYTHPPISERIERLKQM</sequence>
<accession>Q8DPH5</accession>
<dbReference type="EC" id="3.4.24.-" evidence="1"/>
<dbReference type="EMBL" id="AE007317">
    <property type="protein sequence ID" value="AAK99965.1"/>
    <property type="status" value="ALT_INIT"/>
    <property type="molecule type" value="Genomic_DNA"/>
</dbReference>
<dbReference type="PIR" id="A99017">
    <property type="entry name" value="A99017"/>
</dbReference>
<dbReference type="RefSeq" id="NP_358755.1">
    <property type="nucleotide sequence ID" value="NC_003098.1"/>
</dbReference>
<dbReference type="RefSeq" id="WP_000895736.1">
    <property type="nucleotide sequence ID" value="NC_003098.1"/>
</dbReference>
<dbReference type="STRING" id="171101.spr1162"/>
<dbReference type="KEGG" id="spr:spr1162"/>
<dbReference type="PATRIC" id="fig|171101.6.peg.1260"/>
<dbReference type="eggNOG" id="COG0501">
    <property type="taxonomic scope" value="Bacteria"/>
</dbReference>
<dbReference type="HOGENOM" id="CLU_042266_2_1_9"/>
<dbReference type="Proteomes" id="UP000000586">
    <property type="component" value="Chromosome"/>
</dbReference>
<dbReference type="GO" id="GO:0005886">
    <property type="term" value="C:plasma membrane"/>
    <property type="evidence" value="ECO:0007669"/>
    <property type="project" value="UniProtKB-SubCell"/>
</dbReference>
<dbReference type="GO" id="GO:0004222">
    <property type="term" value="F:metalloendopeptidase activity"/>
    <property type="evidence" value="ECO:0007669"/>
    <property type="project" value="UniProtKB-UniRule"/>
</dbReference>
<dbReference type="GO" id="GO:0008270">
    <property type="term" value="F:zinc ion binding"/>
    <property type="evidence" value="ECO:0007669"/>
    <property type="project" value="UniProtKB-UniRule"/>
</dbReference>
<dbReference type="GO" id="GO:0006508">
    <property type="term" value="P:proteolysis"/>
    <property type="evidence" value="ECO:0007669"/>
    <property type="project" value="UniProtKB-KW"/>
</dbReference>
<dbReference type="CDD" id="cd07340">
    <property type="entry name" value="M48B_Htpx_like"/>
    <property type="match status" value="1"/>
</dbReference>
<dbReference type="Gene3D" id="3.30.2010.10">
    <property type="entry name" value="Metalloproteases ('zincins'), catalytic domain"/>
    <property type="match status" value="1"/>
</dbReference>
<dbReference type="HAMAP" id="MF_00188">
    <property type="entry name" value="Pept_M48_protease_HtpX"/>
    <property type="match status" value="1"/>
</dbReference>
<dbReference type="InterPro" id="IPR050083">
    <property type="entry name" value="HtpX_protease"/>
</dbReference>
<dbReference type="InterPro" id="IPR022919">
    <property type="entry name" value="Pept_M48_protease_HtpX"/>
</dbReference>
<dbReference type="InterPro" id="IPR001915">
    <property type="entry name" value="Peptidase_M48"/>
</dbReference>
<dbReference type="NCBIfam" id="NF003425">
    <property type="entry name" value="PRK04897.1"/>
    <property type="match status" value="1"/>
</dbReference>
<dbReference type="PANTHER" id="PTHR43221">
    <property type="entry name" value="PROTEASE HTPX"/>
    <property type="match status" value="1"/>
</dbReference>
<dbReference type="PANTHER" id="PTHR43221:SF1">
    <property type="entry name" value="PROTEASE HTPX"/>
    <property type="match status" value="1"/>
</dbReference>
<dbReference type="Pfam" id="PF01435">
    <property type="entry name" value="Peptidase_M48"/>
    <property type="match status" value="1"/>
</dbReference>
<proteinExistence type="inferred from homology"/>
<organism>
    <name type="scientific">Streptococcus pneumoniae (strain ATCC BAA-255 / R6)</name>
    <dbReference type="NCBI Taxonomy" id="171101"/>
    <lineage>
        <taxon>Bacteria</taxon>
        <taxon>Bacillati</taxon>
        <taxon>Bacillota</taxon>
        <taxon>Bacilli</taxon>
        <taxon>Lactobacillales</taxon>
        <taxon>Streptococcaceae</taxon>
        <taxon>Streptococcus</taxon>
    </lineage>
</organism>
<name>HTPX_STRR6</name>